<reference key="1">
    <citation type="journal article" date="1998" name="Science">
        <title>Genome sequence of the nematode C. elegans: a platform for investigating biology.</title>
        <authorList>
            <consortium name="The C. elegans sequencing consortium"/>
        </authorList>
    </citation>
    <scope>NUCLEOTIDE SEQUENCE [LARGE SCALE GENOMIC DNA]</scope>
    <source>
        <strain>Bristol N2</strain>
    </source>
</reference>
<reference key="2">
    <citation type="journal article" date="2011" name="PLoS Genet.">
        <title>The Caenorhabditis elegans mucin-like protein OSM-8 negatively regulates osmosensitive physiology via the transmembrane protein PTR-23.</title>
        <authorList>
            <person name="Rohlfing A.K."/>
            <person name="Miteva Y."/>
            <person name="Moronetti L."/>
            <person name="He L."/>
            <person name="Lamitina T."/>
        </authorList>
    </citation>
    <scope>FUNCTION</scope>
    <scope>SUBCELLULAR LOCATION</scope>
    <scope>TISSUE SPECIFICITY</scope>
    <scope>DEVELOPMENTAL STAGE</scope>
    <scope>DISRUPTION PHENOTYPE</scope>
</reference>
<comment type="function">
    <text evidence="2">Negative regulator of the osmotic stress response. Acts via the transmembrane protein ptr-23.</text>
</comment>
<comment type="subcellular location">
    <subcellularLocation>
        <location evidence="4">Secreted</location>
    </subcellularLocation>
</comment>
<comment type="tissue specificity">
    <text evidence="2">Expressed in the hypodermal syncitium but not in hypodermal seam cells.</text>
</comment>
<comment type="developmental stage">
    <text evidence="2">Expressed during larval development and strongly down-regulated in adults.</text>
</comment>
<comment type="disruption phenotype">
    <text evidence="2">Normal physiological responses to hypertonic stress, such as accumulation of organic osmolytes and activation of osmoresponsive genes, are constitutively activated with mutants exhibiting resistance to normally lethal levels of hypertonic stress.</text>
</comment>
<comment type="sequence caution" evidence="3">
    <conflict type="erroneous gene model prediction">
        <sequence resource="EMBL-CDS" id="CCD70517"/>
    </conflict>
</comment>
<organism>
    <name type="scientific">Caenorhabditis elegans</name>
    <dbReference type="NCBI Taxonomy" id="6239"/>
    <lineage>
        <taxon>Eukaryota</taxon>
        <taxon>Metazoa</taxon>
        <taxon>Ecdysozoa</taxon>
        <taxon>Nematoda</taxon>
        <taxon>Chromadorea</taxon>
        <taxon>Rhabditida</taxon>
        <taxon>Rhabditina</taxon>
        <taxon>Rhabditomorpha</taxon>
        <taxon>Rhabditoidea</taxon>
        <taxon>Rhabditidae</taxon>
        <taxon>Peloderinae</taxon>
        <taxon>Caenorhabditis</taxon>
    </lineage>
</organism>
<keyword id="KW-1185">Reference proteome</keyword>
<keyword id="KW-0964">Secreted</keyword>
<keyword id="KW-0732">Signal</keyword>
<keyword id="KW-0346">Stress response</keyword>
<protein>
    <recommendedName>
        <fullName>Osmotic avoidance abnormal protein 8</fullName>
    </recommendedName>
</protein>
<gene>
    <name type="primary">osm-8</name>
    <name type="ORF">R07G3.6</name>
</gene>
<accession>Q09423</accession>
<feature type="signal peptide" evidence="1">
    <location>
        <begin position="1"/>
        <end position="21"/>
    </location>
</feature>
<feature type="chain" id="PRO_0000065426" description="Osmotic avoidance abnormal protein 8">
    <location>
        <begin position="22"/>
        <end position="331"/>
    </location>
</feature>
<name>OSM8_CAEEL</name>
<evidence type="ECO:0000255" key="1"/>
<evidence type="ECO:0000269" key="2">
    <source>
    </source>
</evidence>
<evidence type="ECO:0000305" key="3"/>
<evidence type="ECO:0000305" key="4">
    <source>
    </source>
</evidence>
<sequence>MPAKMLKWLLIHIFLIHSIFCQDAPAQMPFFANSDPMMSKLSQIQFADAPTLKGDKYPDVDAHRIIAPIISPIMEVFDQMKENQRARDQAEKIRKDREDHPLSTSRSLWEMFQRLQRPTTTTTEAPPLIERLFKPYIEPWQKQLDDFSKDMAGITLIPTTTTTPAPTTTTTPNFLEKSLSMFFPSLRRKPQSIPTLPPTTTPTPRLFDPEMFDRLFFKRDKRQATIAPAPKFDIFTVPPPPPLFQEWEKPILSLSNPFTLNPLMKMFTTPSPPQTLAPLPKIPEPNPYEIKKGLPEPQFKLQDPFYNPLFPSRKSKMFDFLAGGEAGRLLG</sequence>
<proteinExistence type="evidence at transcript level"/>
<dbReference type="EMBL" id="FO081291">
    <property type="protein sequence ID" value="CCD70517.1"/>
    <property type="status" value="ALT_SEQ"/>
    <property type="molecule type" value="Genomic_DNA"/>
</dbReference>
<dbReference type="PIR" id="T16704">
    <property type="entry name" value="T16704"/>
</dbReference>
<dbReference type="RefSeq" id="NP_495595.2">
    <property type="nucleotide sequence ID" value="NM_063194.8"/>
</dbReference>
<dbReference type="FunCoup" id="Q09423">
    <property type="interactions" value="214"/>
</dbReference>
<dbReference type="STRING" id="6239.R07G3.6.1"/>
<dbReference type="PaxDb" id="6239-R07G3.6"/>
<dbReference type="PeptideAtlas" id="Q09423"/>
<dbReference type="EnsemblMetazoa" id="R07G3.6.1">
    <property type="protein sequence ID" value="R07G3.6.1"/>
    <property type="gene ID" value="WBGene00003888"/>
</dbReference>
<dbReference type="GeneID" id="187684"/>
<dbReference type="KEGG" id="cel:CELE_R07G3.6"/>
<dbReference type="UCSC" id="R07G3.6">
    <property type="organism name" value="c. elegans"/>
</dbReference>
<dbReference type="AGR" id="WB:WBGene00003888"/>
<dbReference type="CTD" id="187684"/>
<dbReference type="WormBase" id="R07G3.6">
    <property type="protein sequence ID" value="CE50739"/>
    <property type="gene ID" value="WBGene00003888"/>
    <property type="gene designation" value="osm-8"/>
</dbReference>
<dbReference type="eggNOG" id="ENOG502TFRG">
    <property type="taxonomic scope" value="Eukaryota"/>
</dbReference>
<dbReference type="HOGENOM" id="CLU_915973_0_0_1"/>
<dbReference type="InParanoid" id="Q09423"/>
<dbReference type="OMA" id="PQFKLQD"/>
<dbReference type="OrthoDB" id="5828086at2759"/>
<dbReference type="PRO" id="PR:Q09423"/>
<dbReference type="Proteomes" id="UP000001940">
    <property type="component" value="Chromosome II"/>
</dbReference>
<dbReference type="Bgee" id="WBGene00003888">
    <property type="expression patterns" value="Expressed in embryo and 4 other cell types or tissues"/>
</dbReference>
<dbReference type="GO" id="GO:0005615">
    <property type="term" value="C:extracellular space"/>
    <property type="evidence" value="ECO:0000315"/>
    <property type="project" value="UniProtKB"/>
</dbReference>
<dbReference type="GO" id="GO:0010468">
    <property type="term" value="P:regulation of gene expression"/>
    <property type="evidence" value="ECO:0000315"/>
    <property type="project" value="UniProtKB"/>
</dbReference>
<dbReference type="GO" id="GO:0006970">
    <property type="term" value="P:response to osmotic stress"/>
    <property type="evidence" value="ECO:0000315"/>
    <property type="project" value="UniProtKB"/>
</dbReference>